<proteinExistence type="inferred from homology"/>
<dbReference type="EMBL" id="EF506945">
    <property type="protein sequence ID" value="ABO69306.1"/>
    <property type="molecule type" value="Genomic_DNA"/>
</dbReference>
<dbReference type="RefSeq" id="YP_001382164.1">
    <property type="nucleotide sequence ID" value="NC_009681.1"/>
</dbReference>
<dbReference type="SMR" id="A6YG87"/>
<dbReference type="GeneID" id="5383745"/>
<dbReference type="GO" id="GO:0009535">
    <property type="term" value="C:chloroplast thylakoid membrane"/>
    <property type="evidence" value="ECO:0007669"/>
    <property type="project" value="UniProtKB-SubCell"/>
</dbReference>
<dbReference type="GO" id="GO:0009539">
    <property type="term" value="C:photosystem II reaction center"/>
    <property type="evidence" value="ECO:0007669"/>
    <property type="project" value="InterPro"/>
</dbReference>
<dbReference type="GO" id="GO:0015979">
    <property type="term" value="P:photosynthesis"/>
    <property type="evidence" value="ECO:0007669"/>
    <property type="project" value="UniProtKB-UniRule"/>
</dbReference>
<dbReference type="Gene3D" id="6.10.250.2070">
    <property type="match status" value="1"/>
</dbReference>
<dbReference type="HAMAP" id="MF_01305">
    <property type="entry name" value="PSII_PsbJ"/>
    <property type="match status" value="1"/>
</dbReference>
<dbReference type="InterPro" id="IPR002682">
    <property type="entry name" value="PSII_PsbJ"/>
</dbReference>
<dbReference type="InterPro" id="IPR037267">
    <property type="entry name" value="PSII_PsbJ_sf"/>
</dbReference>
<dbReference type="NCBIfam" id="NF002722">
    <property type="entry name" value="PRK02565.1"/>
    <property type="match status" value="1"/>
</dbReference>
<dbReference type="PANTHER" id="PTHR34812">
    <property type="entry name" value="PHOTOSYSTEM II REACTION CENTER PROTEIN J"/>
    <property type="match status" value="1"/>
</dbReference>
<dbReference type="PANTHER" id="PTHR34812:SF3">
    <property type="entry name" value="PHOTOSYSTEM II REACTION CENTER PROTEIN J"/>
    <property type="match status" value="1"/>
</dbReference>
<dbReference type="Pfam" id="PF01788">
    <property type="entry name" value="PsbJ"/>
    <property type="match status" value="1"/>
</dbReference>
<dbReference type="SUPFAM" id="SSF161021">
    <property type="entry name" value="Photosystem II reaction center protein J, PsbJ"/>
    <property type="match status" value="1"/>
</dbReference>
<gene>
    <name evidence="1" type="primary">psbJ</name>
</gene>
<comment type="function">
    <text evidence="1">One of the components of the core complex of photosystem II (PSII). PSII is a light-driven water:plastoquinone oxidoreductase that uses light energy to abstract electrons from H(2)O, generating O(2) and a proton gradient subsequently used for ATP formation. It consists of a core antenna complex that captures photons, and an electron transfer chain that converts photonic excitation into a charge separation.</text>
</comment>
<comment type="subunit">
    <text evidence="1">PSII is composed of 1 copy each of membrane proteins PsbA, PsbB, PsbC, PsbD, PsbE, PsbF, PsbH, PsbI, PsbJ, PsbK, PsbL, PsbM, PsbT, PsbX, PsbY, PsbZ, Psb30/Ycf12, at least 3 peripheral proteins of the oxygen-evolving complex and a large number of cofactors. It forms dimeric complexes.</text>
</comment>
<comment type="subcellular location">
    <subcellularLocation>
        <location evidence="1">Plastid</location>
        <location evidence="1">Chloroplast thylakoid membrane</location>
        <topology evidence="1">Single-pass membrane protein</topology>
    </subcellularLocation>
</comment>
<comment type="similarity">
    <text evidence="1">Belongs to the PsbJ family.</text>
</comment>
<feature type="chain" id="PRO_0000322062" description="Photosystem II reaction center protein J">
    <location>
        <begin position="1"/>
        <end position="42"/>
    </location>
</feature>
<feature type="transmembrane region" description="Helical" evidence="1">
    <location>
        <begin position="10"/>
        <end position="30"/>
    </location>
</feature>
<accession>A6YG87</accession>
<keyword id="KW-0150">Chloroplast</keyword>
<keyword id="KW-0472">Membrane</keyword>
<keyword id="KW-0602">Photosynthesis</keyword>
<keyword id="KW-0604">Photosystem II</keyword>
<keyword id="KW-0934">Plastid</keyword>
<keyword id="KW-0674">Reaction center</keyword>
<keyword id="KW-0793">Thylakoid</keyword>
<keyword id="KW-0812">Transmembrane</keyword>
<keyword id="KW-1133">Transmembrane helix</keyword>
<evidence type="ECO:0000255" key="1">
    <source>
        <dbReference type="HAMAP-Rule" id="MF_01305"/>
    </source>
</evidence>
<organism>
    <name type="scientific">Pleurastrum terricola</name>
    <name type="common">Filamentous green alga</name>
    <name type="synonym">Leptosira terrestris</name>
    <dbReference type="NCBI Taxonomy" id="34116"/>
    <lineage>
        <taxon>Eukaryota</taxon>
        <taxon>Viridiplantae</taxon>
        <taxon>Chlorophyta</taxon>
        <taxon>core chlorophytes</taxon>
        <taxon>Chlorophyceae</taxon>
        <taxon>CS clade</taxon>
        <taxon>Chlamydomonadales</taxon>
        <taxon>Pleurastraceae</taxon>
        <taxon>Pleurastrum</taxon>
    </lineage>
</organism>
<sequence>MADIGTTGRIPLWLVGTVAGTAAIGLLGIFFYGSYVGLGSSL</sequence>
<geneLocation type="chloroplast"/>
<protein>
    <recommendedName>
        <fullName evidence="1">Photosystem II reaction center protein J</fullName>
        <shortName evidence="1">PSII-J</shortName>
    </recommendedName>
</protein>
<name>PSBJ_PLETE</name>
<reference key="1">
    <citation type="journal article" date="2007" name="BMC Genomics">
        <title>The chloroplast genome sequence of the green alga Leptosira terrestris: multiple losses of the inverted repeat and extensive genome rearrangements within the Trebouxiophyceae.</title>
        <authorList>
            <person name="de Cambiaire J.-C."/>
            <person name="Otis C."/>
            <person name="Turmel M."/>
            <person name="Lemieux C."/>
        </authorList>
    </citation>
    <scope>NUCLEOTIDE SEQUENCE [LARGE SCALE GENOMIC DNA]</scope>
    <source>
        <strain>CCAP 463/2 / UTEX 333</strain>
    </source>
</reference>